<proteinExistence type="evidence at protein level"/>
<keyword id="KW-0002">3D-structure</keyword>
<keyword id="KW-0007">Acetylation</keyword>
<keyword id="KW-0963">Cytoplasm</keyword>
<keyword id="KW-0967">Endosome</keyword>
<keyword id="KW-0472">Membrane</keyword>
<keyword id="KW-0597">Phosphoprotein</keyword>
<keyword id="KW-0653">Protein transport</keyword>
<keyword id="KW-1185">Reference proteome</keyword>
<keyword id="KW-0813">Transport</keyword>
<sequence>MNNNVEELLRRIPLYNKYGKDFPQETVTRFQMPEFKLPALQPTRDLLCPWYEECDNITKVCQLHDSSNKKFDQWYKEQYLSKKPPGIVGNTLLSPSRKDNS</sequence>
<name>MVB12_YEAST</name>
<accession>P42939</accession>
<accession>D6VUY9</accession>
<protein>
    <recommendedName>
        <fullName>Multivesicular body sorting factor 12</fullName>
    </recommendedName>
    <alternativeName>
        <fullName>12 kDa multivesicular body sorting factor</fullName>
    </alternativeName>
    <alternativeName>
        <fullName>ESCRT-I complex subunit MVB12</fullName>
    </alternativeName>
</protein>
<gene>
    <name type="primary">MVB12</name>
    <name type="ordered locus">YGR206W</name>
    <name type="ORF">G7740</name>
</gene>
<organism>
    <name type="scientific">Saccharomyces cerevisiae (strain ATCC 204508 / S288c)</name>
    <name type="common">Baker's yeast</name>
    <dbReference type="NCBI Taxonomy" id="559292"/>
    <lineage>
        <taxon>Eukaryota</taxon>
        <taxon>Fungi</taxon>
        <taxon>Dikarya</taxon>
        <taxon>Ascomycota</taxon>
        <taxon>Saccharomycotina</taxon>
        <taxon>Saccharomycetes</taxon>
        <taxon>Saccharomycetales</taxon>
        <taxon>Saccharomycetaceae</taxon>
        <taxon>Saccharomyces</taxon>
    </lineage>
</organism>
<dbReference type="EMBL" id="Z49133">
    <property type="protein sequence ID" value="CAA88999.1"/>
    <property type="molecule type" value="Genomic_DNA"/>
</dbReference>
<dbReference type="EMBL" id="Z72991">
    <property type="protein sequence ID" value="CAA97233.1"/>
    <property type="molecule type" value="Genomic_DNA"/>
</dbReference>
<dbReference type="EMBL" id="AY692570">
    <property type="protein sequence ID" value="AAT92589.1"/>
    <property type="molecule type" value="Genomic_DNA"/>
</dbReference>
<dbReference type="EMBL" id="BK006941">
    <property type="protein sequence ID" value="DAA08300.1"/>
    <property type="molecule type" value="Genomic_DNA"/>
</dbReference>
<dbReference type="PIR" id="S53929">
    <property type="entry name" value="S53929"/>
</dbReference>
<dbReference type="RefSeq" id="NP_011722.3">
    <property type="nucleotide sequence ID" value="NM_001181335.3"/>
</dbReference>
<dbReference type="PDB" id="2P22">
    <property type="method" value="X-ray"/>
    <property type="resolution" value="2.70 A"/>
    <property type="chains" value="D=4-81"/>
</dbReference>
<dbReference type="PDBsum" id="2P22"/>
<dbReference type="SMR" id="P42939"/>
<dbReference type="BioGRID" id="33459">
    <property type="interactions" value="163"/>
</dbReference>
<dbReference type="ComplexPortal" id="CPX-940">
    <property type="entry name" value="ESCRT-I complex"/>
</dbReference>
<dbReference type="DIP" id="DIP-5332N"/>
<dbReference type="FunCoup" id="P42939">
    <property type="interactions" value="102"/>
</dbReference>
<dbReference type="IntAct" id="P42939">
    <property type="interactions" value="6"/>
</dbReference>
<dbReference type="MINT" id="P42939"/>
<dbReference type="STRING" id="4932.YGR206W"/>
<dbReference type="TCDB" id="3.A.31.1.1">
    <property type="family name" value="the endosomal sorting complexes required for transport iii (escrt-iii) family"/>
</dbReference>
<dbReference type="iPTMnet" id="P42939"/>
<dbReference type="PaxDb" id="4932-YGR206W"/>
<dbReference type="PeptideAtlas" id="P42939"/>
<dbReference type="EnsemblFungi" id="YGR206W_mRNA">
    <property type="protein sequence ID" value="YGR206W"/>
    <property type="gene ID" value="YGR206W"/>
</dbReference>
<dbReference type="GeneID" id="853120"/>
<dbReference type="KEGG" id="sce:YGR206W"/>
<dbReference type="AGR" id="SGD:S000003438"/>
<dbReference type="SGD" id="S000003438">
    <property type="gene designation" value="MVB12"/>
</dbReference>
<dbReference type="VEuPathDB" id="FungiDB:YGR206W"/>
<dbReference type="eggNOG" id="ENOG502S5VY">
    <property type="taxonomic scope" value="Eukaryota"/>
</dbReference>
<dbReference type="HOGENOM" id="CLU_154027_0_0_1"/>
<dbReference type="InParanoid" id="P42939"/>
<dbReference type="OMA" id="PWYEECD"/>
<dbReference type="OrthoDB" id="4065295at2759"/>
<dbReference type="BioCyc" id="YEAST:G3O-30889-MONOMER"/>
<dbReference type="BioGRID-ORCS" id="853120">
    <property type="hits" value="0 hits in 10 CRISPR screens"/>
</dbReference>
<dbReference type="EvolutionaryTrace" id="P42939"/>
<dbReference type="PRO" id="PR:P42939"/>
<dbReference type="Proteomes" id="UP000002311">
    <property type="component" value="Chromosome VII"/>
</dbReference>
<dbReference type="RNAct" id="P42939">
    <property type="molecule type" value="protein"/>
</dbReference>
<dbReference type="GO" id="GO:0005829">
    <property type="term" value="C:cytosol"/>
    <property type="evidence" value="ECO:0000314"/>
    <property type="project" value="SGD"/>
</dbReference>
<dbReference type="GO" id="GO:0005768">
    <property type="term" value="C:endosome"/>
    <property type="evidence" value="ECO:0000314"/>
    <property type="project" value="SGD"/>
</dbReference>
<dbReference type="GO" id="GO:0000813">
    <property type="term" value="C:ESCRT I complex"/>
    <property type="evidence" value="ECO:0000314"/>
    <property type="project" value="SGD"/>
</dbReference>
<dbReference type="GO" id="GO:0031902">
    <property type="term" value="C:late endosome membrane"/>
    <property type="evidence" value="ECO:0007669"/>
    <property type="project" value="UniProtKB-SubCell"/>
</dbReference>
<dbReference type="GO" id="GO:0043130">
    <property type="term" value="F:ubiquitin binding"/>
    <property type="evidence" value="ECO:0000314"/>
    <property type="project" value="SGD"/>
</dbReference>
<dbReference type="GO" id="GO:1904669">
    <property type="term" value="P:ATP export"/>
    <property type="evidence" value="ECO:0000315"/>
    <property type="project" value="SGD"/>
</dbReference>
<dbReference type="GO" id="GO:0032509">
    <property type="term" value="P:endosome transport via multivesicular body sorting pathway"/>
    <property type="evidence" value="ECO:0007669"/>
    <property type="project" value="InterPro"/>
</dbReference>
<dbReference type="GO" id="GO:0031333">
    <property type="term" value="P:negative regulation of protein-containing complex assembly"/>
    <property type="evidence" value="ECO:0000315"/>
    <property type="project" value="SGD"/>
</dbReference>
<dbReference type="GO" id="GO:0006623">
    <property type="term" value="P:protein targeting to vacuole"/>
    <property type="evidence" value="ECO:0000315"/>
    <property type="project" value="SGD"/>
</dbReference>
<dbReference type="GO" id="GO:0043162">
    <property type="term" value="P:ubiquitin-dependent protein catabolic process via the multivesicular body sorting pathway"/>
    <property type="evidence" value="ECO:0000314"/>
    <property type="project" value="ComplexPortal"/>
</dbReference>
<dbReference type="Gene3D" id="6.10.250.1830">
    <property type="match status" value="1"/>
</dbReference>
<dbReference type="InterPro" id="IPR019014">
    <property type="entry name" value="Mvb12"/>
</dbReference>
<dbReference type="Pfam" id="PF09452">
    <property type="entry name" value="Mvb12"/>
    <property type="match status" value="1"/>
</dbReference>
<feature type="chain" id="PRO_0000202845" description="Multivesicular body sorting factor 12">
    <location>
        <begin position="1"/>
        <end position="101"/>
    </location>
</feature>
<feature type="modified residue" description="N-acetylmethionine" evidence="7">
    <location>
        <position position="1"/>
    </location>
</feature>
<feature type="modified residue" description="Phosphoserine" evidence="6">
    <location>
        <position position="94"/>
    </location>
</feature>
<feature type="mutagenesis site" description="Defective in MVB12 incorporation in ESCRT-I complex; reduces localization to MVBs; abolishes interaction with STP22 and SRN2; when associated with D-57.">
    <original>L</original>
    <variation>D</variation>
    <location>
        <position position="47"/>
    </location>
</feature>
<feature type="mutagenesis site" description="Defective in MVB12 incorporation in ESCRT-I complex; when associated with D-57." evidence="4">
    <original>C</original>
    <variation>D</variation>
    <location>
        <position position="54"/>
    </location>
</feature>
<feature type="mutagenesis site" description="Defective in MVB12 incorporation in ESCRT-I complex; reduces localization to MVBs; abolishes interaction with STP22 and SRN2; when associated with D-47." evidence="4">
    <original>I</original>
    <variation>D</variation>
    <location>
        <position position="57"/>
    </location>
</feature>
<feature type="mutagenesis site" description="Defective in MVB12 incorporation in ESCRT-I complex; when associated with D-47." evidence="4">
    <original>H</original>
    <variation>D</variation>
    <location>
        <position position="64"/>
    </location>
</feature>
<feature type="helix" evidence="8">
    <location>
        <begin position="4"/>
        <end position="11"/>
    </location>
</feature>
<feature type="strand" evidence="8">
    <location>
        <begin position="15"/>
        <end position="19"/>
    </location>
</feature>
<feature type="helix" evidence="8">
    <location>
        <begin position="41"/>
        <end position="65"/>
    </location>
</feature>
<feature type="helix" evidence="8">
    <location>
        <begin position="67"/>
        <end position="78"/>
    </location>
</feature>
<evidence type="ECO:0000269" key="1">
    <source>
    </source>
</evidence>
<evidence type="ECO:0000269" key="2">
    <source>
    </source>
</evidence>
<evidence type="ECO:0000269" key="3">
    <source>
    </source>
</evidence>
<evidence type="ECO:0000269" key="4">
    <source>
    </source>
</evidence>
<evidence type="ECO:0000305" key="5">
    <source>
    </source>
</evidence>
<evidence type="ECO:0007744" key="6">
    <source>
    </source>
</evidence>
<evidence type="ECO:0007744" key="7">
    <source>
    </source>
</evidence>
<evidence type="ECO:0007829" key="8">
    <source>
        <dbReference type="PDB" id="2P22"/>
    </source>
</evidence>
<comment type="function">
    <text evidence="2">Component of the ESCRT-I complex, a regulator of vesicular trafficking process. Binds to ubiquitinated cargo proteins and is required for the sorting of endocytic ubiquitinated cargos into multivesicular bodies (MVBs). Appears to be involved in cargo sorting and release of the ESCRT-I complex from the MVBs.</text>
</comment>
<comment type="subunit">
    <text evidence="2 3 4">Component of the ESCRT-I complex (endosomal sorting complex required for transport I) which consists of STP22, VPS28, SRN2 and MVB12 in a 1:1:1:1 stoichiometry. Interacts with STP22 and SRN2.</text>
</comment>
<comment type="interaction">
    <interactant intactId="EBI-23478">
        <id>P42939</id>
    </interactant>
    <interactant intactId="EBI-18076">
        <id>Q99176</id>
        <label>SRN2</label>
    </interactant>
    <organismsDiffer>false</organismsDiffer>
    <experiments>10</experiments>
</comment>
<comment type="interaction">
    <interactant intactId="EBI-23478">
        <id>P42939</id>
    </interactant>
    <interactant intactId="EBI-411625">
        <id>P25604</id>
        <label>STP22</label>
    </interactant>
    <organismsDiffer>false</organismsDiffer>
    <experiments>13</experiments>
</comment>
<comment type="subcellular location">
    <subcellularLocation>
        <location evidence="2">Cytoplasm</location>
    </subcellularLocation>
    <subcellularLocation>
        <location evidence="2">Endosome</location>
    </subcellularLocation>
    <subcellularLocation>
        <location evidence="5">Late endosome membrane</location>
        <topology evidence="5">Peripheral membrane protein</topology>
    </subcellularLocation>
</comment>
<comment type="miscellaneous">
    <text evidence="1">Present with 752 molecules/cell in log phase SD medium.</text>
</comment>
<reference key="1">
    <citation type="journal article" date="1996" name="Yeast">
        <title>Sequencing of a 17.6 kb segment on the right arm of yeast chromosome VII reveals 12 ORFs, including CCT, ADE3 and TR-I genes, homologues of the yeast PMT and EF1G genes, of the human and bacterial electron-transferring flavoproteins (beta-chain) and of the Escherichia coli phosphoserine phosphohydrolase, and five new ORFs.</title>
        <authorList>
            <person name="Guerreiro P."/>
            <person name="Barreiros T."/>
            <person name="Soares H."/>
            <person name="Cyrne L."/>
            <person name="Maia e Silva A."/>
            <person name="Rodrigues-Pousada C."/>
        </authorList>
    </citation>
    <scope>NUCLEOTIDE SEQUENCE [GENOMIC DNA]</scope>
    <source>
        <strain>ATCC 204508 / S288c</strain>
    </source>
</reference>
<reference key="2">
    <citation type="journal article" date="1997" name="Nature">
        <title>The nucleotide sequence of Saccharomyces cerevisiae chromosome VII.</title>
        <authorList>
            <person name="Tettelin H."/>
            <person name="Agostoni-Carbone M.L."/>
            <person name="Albermann K."/>
            <person name="Albers M."/>
            <person name="Arroyo J."/>
            <person name="Backes U."/>
            <person name="Barreiros T."/>
            <person name="Bertani I."/>
            <person name="Bjourson A.J."/>
            <person name="Brueckner M."/>
            <person name="Bruschi C.V."/>
            <person name="Carignani G."/>
            <person name="Castagnoli L."/>
            <person name="Cerdan E."/>
            <person name="Clemente M.L."/>
            <person name="Coblenz A."/>
            <person name="Coglievina M."/>
            <person name="Coissac E."/>
            <person name="Defoor E."/>
            <person name="Del Bino S."/>
            <person name="Delius H."/>
            <person name="Delneri D."/>
            <person name="de Wergifosse P."/>
            <person name="Dujon B."/>
            <person name="Durand P."/>
            <person name="Entian K.-D."/>
            <person name="Eraso P."/>
            <person name="Escribano V."/>
            <person name="Fabiani L."/>
            <person name="Fartmann B."/>
            <person name="Feroli F."/>
            <person name="Feuermann M."/>
            <person name="Frontali L."/>
            <person name="Garcia-Gonzalez M."/>
            <person name="Garcia-Saez M.I."/>
            <person name="Goffeau A."/>
            <person name="Guerreiro P."/>
            <person name="Hani J."/>
            <person name="Hansen M."/>
            <person name="Hebling U."/>
            <person name="Hernandez K."/>
            <person name="Heumann K."/>
            <person name="Hilger F."/>
            <person name="Hofmann B."/>
            <person name="Indge K.J."/>
            <person name="James C.M."/>
            <person name="Klima R."/>
            <person name="Koetter P."/>
            <person name="Kramer B."/>
            <person name="Kramer W."/>
            <person name="Lauquin G."/>
            <person name="Leuther H."/>
            <person name="Louis E.J."/>
            <person name="Maillier E."/>
            <person name="Marconi A."/>
            <person name="Martegani E."/>
            <person name="Mazon M.J."/>
            <person name="Mazzoni C."/>
            <person name="McReynolds A.D.K."/>
            <person name="Melchioretto P."/>
            <person name="Mewes H.-W."/>
            <person name="Minenkova O."/>
            <person name="Mueller-Auer S."/>
            <person name="Nawrocki A."/>
            <person name="Netter P."/>
            <person name="Neu R."/>
            <person name="Nombela C."/>
            <person name="Oliver S.G."/>
            <person name="Panzeri L."/>
            <person name="Paoluzi S."/>
            <person name="Plevani P."/>
            <person name="Portetelle D."/>
            <person name="Portillo F."/>
            <person name="Potier S."/>
            <person name="Purnelle B."/>
            <person name="Rieger M."/>
            <person name="Riles L."/>
            <person name="Rinaldi T."/>
            <person name="Robben J."/>
            <person name="Rodrigues-Pousada C."/>
            <person name="Rodriguez-Belmonte E."/>
            <person name="Rodriguez-Torres A.M."/>
            <person name="Rose M."/>
            <person name="Ruzzi M."/>
            <person name="Saliola M."/>
            <person name="Sanchez-Perez M."/>
            <person name="Schaefer B."/>
            <person name="Schaefer M."/>
            <person name="Scharfe M."/>
            <person name="Schmidheini T."/>
            <person name="Schreer A."/>
            <person name="Skala J."/>
            <person name="Souciet J.-L."/>
            <person name="Steensma H.Y."/>
            <person name="Talla E."/>
            <person name="Thierry A."/>
            <person name="Vandenbol M."/>
            <person name="van der Aart Q.J.M."/>
            <person name="Van Dyck L."/>
            <person name="Vanoni M."/>
            <person name="Verhasselt P."/>
            <person name="Voet M."/>
            <person name="Volckaert G."/>
            <person name="Wambutt R."/>
            <person name="Watson M.D."/>
            <person name="Weber N."/>
            <person name="Wedler E."/>
            <person name="Wedler H."/>
            <person name="Wipfli P."/>
            <person name="Wolf K."/>
            <person name="Wright L.F."/>
            <person name="Zaccaria P."/>
            <person name="Zimmermann M."/>
            <person name="Zollner A."/>
            <person name="Kleine K."/>
        </authorList>
    </citation>
    <scope>NUCLEOTIDE SEQUENCE [LARGE SCALE GENOMIC DNA]</scope>
    <source>
        <strain>ATCC 204508 / S288c</strain>
    </source>
</reference>
<reference key="3">
    <citation type="journal article" date="2014" name="G3 (Bethesda)">
        <title>The reference genome sequence of Saccharomyces cerevisiae: Then and now.</title>
        <authorList>
            <person name="Engel S.R."/>
            <person name="Dietrich F.S."/>
            <person name="Fisk D.G."/>
            <person name="Binkley G."/>
            <person name="Balakrishnan R."/>
            <person name="Costanzo M.C."/>
            <person name="Dwight S.S."/>
            <person name="Hitz B.C."/>
            <person name="Karra K."/>
            <person name="Nash R.S."/>
            <person name="Weng S."/>
            <person name="Wong E.D."/>
            <person name="Lloyd P."/>
            <person name="Skrzypek M.S."/>
            <person name="Miyasato S.R."/>
            <person name="Simison M."/>
            <person name="Cherry J.M."/>
        </authorList>
    </citation>
    <scope>GENOME REANNOTATION</scope>
    <source>
        <strain>ATCC 204508 / S288c</strain>
    </source>
</reference>
<reference key="4">
    <citation type="journal article" date="2007" name="Genome Res.">
        <title>Approaching a complete repository of sequence-verified protein-encoding clones for Saccharomyces cerevisiae.</title>
        <authorList>
            <person name="Hu Y."/>
            <person name="Rolfs A."/>
            <person name="Bhullar B."/>
            <person name="Murthy T.V.S."/>
            <person name="Zhu C."/>
            <person name="Berger M.F."/>
            <person name="Camargo A.A."/>
            <person name="Kelley F."/>
            <person name="McCarron S."/>
            <person name="Jepson D."/>
            <person name="Richardson A."/>
            <person name="Raphael J."/>
            <person name="Moreira D."/>
            <person name="Taycher E."/>
            <person name="Zuo D."/>
            <person name="Mohr S."/>
            <person name="Kane M.F."/>
            <person name="Williamson J."/>
            <person name="Simpson A.J.G."/>
            <person name="Bulyk M.L."/>
            <person name="Harlow E."/>
            <person name="Marsischky G."/>
            <person name="Kolodner R.D."/>
            <person name="LaBaer J."/>
        </authorList>
    </citation>
    <scope>NUCLEOTIDE SEQUENCE [GENOMIC DNA]</scope>
    <source>
        <strain>ATCC 204508 / S288c</strain>
    </source>
</reference>
<reference key="5">
    <citation type="journal article" date="2003" name="Nature">
        <title>Global analysis of protein expression in yeast.</title>
        <authorList>
            <person name="Ghaemmaghami S."/>
            <person name="Huh W.-K."/>
            <person name="Bower K."/>
            <person name="Howson R.W."/>
            <person name="Belle A."/>
            <person name="Dephoure N."/>
            <person name="O'Shea E.K."/>
            <person name="Weissman J.S."/>
        </authorList>
    </citation>
    <scope>LEVEL OF PROTEIN EXPRESSION [LARGE SCALE ANALYSIS]</scope>
</reference>
<reference key="6">
    <citation type="journal article" date="2007" name="EMBO J.">
        <title>Structural insight into the ESCRT-I/-II link and its role in MVB trafficking.</title>
        <authorList>
            <person name="Gill D.J."/>
            <person name="Teo H."/>
            <person name="Sun J."/>
            <person name="Perisic O."/>
            <person name="Veprintsev D.B."/>
            <person name="Emr S.D."/>
            <person name="Williams R.L."/>
        </authorList>
    </citation>
    <scope>IDENTIFICATION IN THE ESCRT-I COMPLEX</scope>
    <scope>COMPOSITION OF THE ESCRT-I COMPLEX</scope>
</reference>
<reference key="7">
    <citation type="journal article" date="2007" name="Mol. Biol. Cell">
        <title>Efficient cargo sorting by ESCRT-I and the subsequent release of ESCRT-I from multivesicular bodies requires the subunit Mvb12.</title>
        <authorList>
            <person name="Curtiss M."/>
            <person name="Jones C."/>
            <person name="Babst M."/>
        </authorList>
    </citation>
    <scope>FUNCTION</scope>
    <scope>SUBCELLULAR LOCATION</scope>
    <scope>IDENTIFICATION IN THE ESCRT-I COMPLEX</scope>
</reference>
<reference key="8">
    <citation type="journal article" date="2007" name="Proc. Natl. Acad. Sci. U.S.A.">
        <title>Analysis of phosphorylation sites on proteins from Saccharomyces cerevisiae by electron transfer dissociation (ETD) mass spectrometry.</title>
        <authorList>
            <person name="Chi A."/>
            <person name="Huttenhower C."/>
            <person name="Geer L.Y."/>
            <person name="Coon J.J."/>
            <person name="Syka J.E.P."/>
            <person name="Bai D.L."/>
            <person name="Shabanowitz J."/>
            <person name="Burke D.J."/>
            <person name="Troyanskaya O.G."/>
            <person name="Hunt D.F."/>
        </authorList>
    </citation>
    <scope>PHOSPHORYLATION [LARGE SCALE ANALYSIS] AT SER-94</scope>
    <scope>IDENTIFICATION BY MASS SPECTROMETRY [LARGE SCALE ANALYSIS]</scope>
</reference>
<reference key="9">
    <citation type="journal article" date="2012" name="Proc. Natl. Acad. Sci. U.S.A.">
        <title>N-terminal acetylome analyses and functional insights of the N-terminal acetyltransferase NatB.</title>
        <authorList>
            <person name="Van Damme P."/>
            <person name="Lasa M."/>
            <person name="Polevoda B."/>
            <person name="Gazquez C."/>
            <person name="Elosegui-Artola A."/>
            <person name="Kim D.S."/>
            <person name="De Juan-Pardo E."/>
            <person name="Demeyer K."/>
            <person name="Hole K."/>
            <person name="Larrea E."/>
            <person name="Timmerman E."/>
            <person name="Prieto J."/>
            <person name="Arnesen T."/>
            <person name="Sherman F."/>
            <person name="Gevaert K."/>
            <person name="Aldabe R."/>
        </authorList>
    </citation>
    <scope>ACETYLATION [LARGE SCALE ANALYSIS] AT MET-1</scope>
    <scope>IDENTIFICATION BY MASS SPECTROMETRY [LARGE SCALE ANALYSIS]</scope>
</reference>
<reference key="10">
    <citation type="journal article" date="2007" name="Cell">
        <title>Molecular architecture and functional model of the complete yeast ESCRT-I heterotetramer.</title>
        <authorList>
            <person name="Kostelansky M.S."/>
            <person name="Schluter C."/>
            <person name="Tam Y.Y."/>
            <person name="Lee S."/>
            <person name="Ghirlando R."/>
            <person name="Beach B."/>
            <person name="Conibear E."/>
            <person name="Hurley J.H."/>
        </authorList>
    </citation>
    <scope>X-RAY CRYSTALLOGRAPHY (2.7 ANGSTROMS) OF 4-81</scope>
    <scope>COMPOSITION OF THE ESCRT-I COMPLEX</scope>
    <scope>INTERACTION WITH STP22 AND SRN2</scope>
    <scope>MUTAGENESIS OF CYS-54; ILE-57 AND HIS-64</scope>
</reference>